<protein>
    <recommendedName>
        <fullName evidence="1">Chaperonin GroEL</fullName>
        <ecNumber evidence="1">5.6.1.7</ecNumber>
    </recommendedName>
    <alternativeName>
        <fullName evidence="1">60 kDa chaperonin</fullName>
    </alternativeName>
    <alternativeName>
        <fullName evidence="1">Chaperonin-60</fullName>
        <shortName evidence="1">Cpn60</shortName>
    </alternativeName>
</protein>
<gene>
    <name evidence="1" type="primary">groEL</name>
    <name evidence="1" type="synonym">groL</name>
    <name type="ordered locus">SFV_4299</name>
</gene>
<reference key="1">
    <citation type="journal article" date="2006" name="BMC Genomics">
        <title>Complete genome sequence of Shigella flexneri 5b and comparison with Shigella flexneri 2a.</title>
        <authorList>
            <person name="Nie H."/>
            <person name="Yang F."/>
            <person name="Zhang X."/>
            <person name="Yang J."/>
            <person name="Chen L."/>
            <person name="Wang J."/>
            <person name="Xiong Z."/>
            <person name="Peng J."/>
            <person name="Sun L."/>
            <person name="Dong J."/>
            <person name="Xue Y."/>
            <person name="Xu X."/>
            <person name="Chen S."/>
            <person name="Yao Z."/>
            <person name="Shen Y."/>
            <person name="Jin Q."/>
        </authorList>
    </citation>
    <scope>NUCLEOTIDE SEQUENCE [LARGE SCALE GENOMIC DNA]</scope>
    <source>
        <strain>8401</strain>
    </source>
</reference>
<accession>Q0SXD6</accession>
<proteinExistence type="inferred from homology"/>
<sequence length="548" mass="57329">MAAKDVKFGNDARVKMLRGVNVLADAVKVTLGPKGRNVVLDKSFGAPTITKDGVSVAREIELEDKFENMGAQMVKEVASKANDAAGDGTTTATVLAQAIITEGLKAVAAGMNPMDLKRGIDKAVTAAVEELKALSVPCSDSKAIAQVGTISANSDETVGKLIAEAMDKVGKEGVITVEDGTGLQDELDVVEGMQFDRGYLSPYFINKPETGAVELESPFILLADKKISNIREMLPVLEAVAKAGKPLLIIAEDVEGEALATLVVNTMRGIVKVAAVKAPGFGDRRKAMLQDIATLTGGTVISEEIGMELEKATLEDLGQAKRVVINKDTTTIIDGVGEEAAIQGRVAQIRQQIEEATSDYDREKLQERVAKLAGGVAVIKVGAATEVEMKEKKARVEDALHATRAAVEEGVVAGGGVALIRVASKLADLRGQNEDQNVGIKVALRAMEAPLRQIVLNCGEEPSVVANTVKGGDGNYGYNAATEEYGNMIDMGILDPTKVTRSALQYAASVAGLMITTECMVTDLPKNDAADLGAAGGMGGMGGMGGMM</sequence>
<feature type="chain" id="PRO_1000025834" description="Chaperonin GroEL">
    <location>
        <begin position="1"/>
        <end position="548"/>
    </location>
</feature>
<feature type="binding site" evidence="1">
    <location>
        <begin position="30"/>
        <end position="33"/>
    </location>
    <ligand>
        <name>ATP</name>
        <dbReference type="ChEBI" id="CHEBI:30616"/>
    </ligand>
</feature>
<feature type="binding site" evidence="1">
    <location>
        <position position="51"/>
    </location>
    <ligand>
        <name>ATP</name>
        <dbReference type="ChEBI" id="CHEBI:30616"/>
    </ligand>
</feature>
<feature type="binding site" evidence="1">
    <location>
        <begin position="87"/>
        <end position="91"/>
    </location>
    <ligand>
        <name>ATP</name>
        <dbReference type="ChEBI" id="CHEBI:30616"/>
    </ligand>
</feature>
<feature type="binding site" evidence="1">
    <location>
        <position position="415"/>
    </location>
    <ligand>
        <name>ATP</name>
        <dbReference type="ChEBI" id="CHEBI:30616"/>
    </ligand>
</feature>
<feature type="binding site" evidence="1">
    <location>
        <begin position="479"/>
        <end position="481"/>
    </location>
    <ligand>
        <name>ATP</name>
        <dbReference type="ChEBI" id="CHEBI:30616"/>
    </ligand>
</feature>
<feature type="binding site" evidence="1">
    <location>
        <position position="495"/>
    </location>
    <ligand>
        <name>ATP</name>
        <dbReference type="ChEBI" id="CHEBI:30616"/>
    </ligand>
</feature>
<organism>
    <name type="scientific">Shigella flexneri serotype 5b (strain 8401)</name>
    <dbReference type="NCBI Taxonomy" id="373384"/>
    <lineage>
        <taxon>Bacteria</taxon>
        <taxon>Pseudomonadati</taxon>
        <taxon>Pseudomonadota</taxon>
        <taxon>Gammaproteobacteria</taxon>
        <taxon>Enterobacterales</taxon>
        <taxon>Enterobacteriaceae</taxon>
        <taxon>Shigella</taxon>
    </lineage>
</organism>
<comment type="function">
    <text evidence="1">Together with its co-chaperonin GroES, plays an essential role in assisting protein folding. The GroEL-GroES system forms a nano-cage that allows encapsulation of the non-native substrate proteins and provides a physical environment optimized to promote and accelerate protein folding.</text>
</comment>
<comment type="catalytic activity">
    <reaction evidence="1">
        <text>ATP + H2O + a folded polypeptide = ADP + phosphate + an unfolded polypeptide.</text>
        <dbReference type="EC" id="5.6.1.7"/>
    </reaction>
</comment>
<comment type="subunit">
    <text evidence="1">Forms a cylinder of 14 subunits composed of two heptameric rings stacked back-to-back. Interacts with the co-chaperonin GroES.</text>
</comment>
<comment type="subcellular location">
    <subcellularLocation>
        <location evidence="1">Cytoplasm</location>
    </subcellularLocation>
</comment>
<comment type="similarity">
    <text evidence="1">Belongs to the chaperonin (HSP60) family.</text>
</comment>
<name>CH60_SHIF8</name>
<dbReference type="EC" id="5.6.1.7" evidence="1"/>
<dbReference type="EMBL" id="CP000266">
    <property type="protein sequence ID" value="ABF06279.1"/>
    <property type="molecule type" value="Genomic_DNA"/>
</dbReference>
<dbReference type="RefSeq" id="WP_000729117.1">
    <property type="nucleotide sequence ID" value="NC_008258.1"/>
</dbReference>
<dbReference type="SMR" id="Q0SXD6"/>
<dbReference type="GeneID" id="93777681"/>
<dbReference type="KEGG" id="sfv:SFV_4299"/>
<dbReference type="HOGENOM" id="CLU_016503_3_0_6"/>
<dbReference type="Proteomes" id="UP000000659">
    <property type="component" value="Chromosome"/>
</dbReference>
<dbReference type="GO" id="GO:0005737">
    <property type="term" value="C:cytoplasm"/>
    <property type="evidence" value="ECO:0007669"/>
    <property type="project" value="UniProtKB-SubCell"/>
</dbReference>
<dbReference type="GO" id="GO:0005524">
    <property type="term" value="F:ATP binding"/>
    <property type="evidence" value="ECO:0007669"/>
    <property type="project" value="UniProtKB-UniRule"/>
</dbReference>
<dbReference type="GO" id="GO:0140662">
    <property type="term" value="F:ATP-dependent protein folding chaperone"/>
    <property type="evidence" value="ECO:0007669"/>
    <property type="project" value="InterPro"/>
</dbReference>
<dbReference type="GO" id="GO:0016853">
    <property type="term" value="F:isomerase activity"/>
    <property type="evidence" value="ECO:0007669"/>
    <property type="project" value="UniProtKB-KW"/>
</dbReference>
<dbReference type="GO" id="GO:0051082">
    <property type="term" value="F:unfolded protein binding"/>
    <property type="evidence" value="ECO:0007669"/>
    <property type="project" value="UniProtKB-UniRule"/>
</dbReference>
<dbReference type="GO" id="GO:0042026">
    <property type="term" value="P:protein refolding"/>
    <property type="evidence" value="ECO:0007669"/>
    <property type="project" value="UniProtKB-UniRule"/>
</dbReference>
<dbReference type="CDD" id="cd03344">
    <property type="entry name" value="GroEL"/>
    <property type="match status" value="1"/>
</dbReference>
<dbReference type="FunFam" id="1.10.560.10:FF:000001">
    <property type="entry name" value="60 kDa chaperonin"/>
    <property type="match status" value="1"/>
</dbReference>
<dbReference type="FunFam" id="3.50.7.10:FF:000001">
    <property type="entry name" value="60 kDa chaperonin"/>
    <property type="match status" value="1"/>
</dbReference>
<dbReference type="Gene3D" id="3.50.7.10">
    <property type="entry name" value="GroEL"/>
    <property type="match status" value="1"/>
</dbReference>
<dbReference type="Gene3D" id="1.10.560.10">
    <property type="entry name" value="GroEL-like equatorial domain"/>
    <property type="match status" value="1"/>
</dbReference>
<dbReference type="Gene3D" id="3.30.260.10">
    <property type="entry name" value="TCP-1-like chaperonin intermediate domain"/>
    <property type="match status" value="1"/>
</dbReference>
<dbReference type="HAMAP" id="MF_00600">
    <property type="entry name" value="CH60"/>
    <property type="match status" value="1"/>
</dbReference>
<dbReference type="InterPro" id="IPR018370">
    <property type="entry name" value="Chaperonin_Cpn60_CS"/>
</dbReference>
<dbReference type="InterPro" id="IPR001844">
    <property type="entry name" value="Cpn60/GroEL"/>
</dbReference>
<dbReference type="InterPro" id="IPR002423">
    <property type="entry name" value="Cpn60/GroEL/TCP-1"/>
</dbReference>
<dbReference type="InterPro" id="IPR027409">
    <property type="entry name" value="GroEL-like_apical_dom_sf"/>
</dbReference>
<dbReference type="InterPro" id="IPR027413">
    <property type="entry name" value="GROEL-like_equatorial_sf"/>
</dbReference>
<dbReference type="InterPro" id="IPR027410">
    <property type="entry name" value="TCP-1-like_intermed_sf"/>
</dbReference>
<dbReference type="NCBIfam" id="TIGR02348">
    <property type="entry name" value="GroEL"/>
    <property type="match status" value="1"/>
</dbReference>
<dbReference type="NCBIfam" id="NF000592">
    <property type="entry name" value="PRK00013.1"/>
    <property type="match status" value="1"/>
</dbReference>
<dbReference type="NCBIfam" id="NF009487">
    <property type="entry name" value="PRK12849.1"/>
    <property type="match status" value="1"/>
</dbReference>
<dbReference type="NCBIfam" id="NF009488">
    <property type="entry name" value="PRK12850.1"/>
    <property type="match status" value="1"/>
</dbReference>
<dbReference type="NCBIfam" id="NF009489">
    <property type="entry name" value="PRK12851.1"/>
    <property type="match status" value="1"/>
</dbReference>
<dbReference type="PANTHER" id="PTHR45633">
    <property type="entry name" value="60 KDA HEAT SHOCK PROTEIN, MITOCHONDRIAL"/>
    <property type="match status" value="1"/>
</dbReference>
<dbReference type="Pfam" id="PF00118">
    <property type="entry name" value="Cpn60_TCP1"/>
    <property type="match status" value="1"/>
</dbReference>
<dbReference type="PRINTS" id="PR00298">
    <property type="entry name" value="CHAPERONIN60"/>
</dbReference>
<dbReference type="SUPFAM" id="SSF52029">
    <property type="entry name" value="GroEL apical domain-like"/>
    <property type="match status" value="1"/>
</dbReference>
<dbReference type="SUPFAM" id="SSF48592">
    <property type="entry name" value="GroEL equatorial domain-like"/>
    <property type="match status" value="1"/>
</dbReference>
<dbReference type="SUPFAM" id="SSF54849">
    <property type="entry name" value="GroEL-intermediate domain like"/>
    <property type="match status" value="1"/>
</dbReference>
<dbReference type="PROSITE" id="PS00296">
    <property type="entry name" value="CHAPERONINS_CPN60"/>
    <property type="match status" value="1"/>
</dbReference>
<keyword id="KW-0067">ATP-binding</keyword>
<keyword id="KW-0143">Chaperone</keyword>
<keyword id="KW-0963">Cytoplasm</keyword>
<keyword id="KW-0413">Isomerase</keyword>
<keyword id="KW-0547">Nucleotide-binding</keyword>
<evidence type="ECO:0000255" key="1">
    <source>
        <dbReference type="HAMAP-Rule" id="MF_00600"/>
    </source>
</evidence>